<gene>
    <name evidence="1" type="primary">rplB</name>
    <name type="ordered locus">CKR_0186</name>
</gene>
<feature type="chain" id="PRO_1000165735" description="Large ribosomal subunit protein uL2">
    <location>
        <begin position="1"/>
        <end position="277"/>
    </location>
</feature>
<feature type="region of interest" description="Disordered" evidence="2">
    <location>
        <begin position="222"/>
        <end position="277"/>
    </location>
</feature>
<name>RL2_CLOK1</name>
<reference key="1">
    <citation type="submission" date="2005-09" db="EMBL/GenBank/DDBJ databases">
        <title>Complete genome sequence of Clostridium kluyveri and comparative genomics of Clostridia species.</title>
        <authorList>
            <person name="Inui M."/>
            <person name="Nonaka H."/>
            <person name="Shinoda Y."/>
            <person name="Ikenaga Y."/>
            <person name="Abe M."/>
            <person name="Naito K."/>
            <person name="Vertes A.A."/>
            <person name="Yukawa H."/>
        </authorList>
    </citation>
    <scope>NUCLEOTIDE SEQUENCE [LARGE SCALE GENOMIC DNA]</scope>
    <source>
        <strain>NBRC 12016</strain>
    </source>
</reference>
<organism>
    <name type="scientific">Clostridium kluyveri (strain NBRC 12016)</name>
    <dbReference type="NCBI Taxonomy" id="583346"/>
    <lineage>
        <taxon>Bacteria</taxon>
        <taxon>Bacillati</taxon>
        <taxon>Bacillota</taxon>
        <taxon>Clostridia</taxon>
        <taxon>Eubacteriales</taxon>
        <taxon>Clostridiaceae</taxon>
        <taxon>Clostridium</taxon>
    </lineage>
</organism>
<comment type="function">
    <text evidence="1">One of the primary rRNA binding proteins. Required for association of the 30S and 50S subunits to form the 70S ribosome, for tRNA binding and peptide bond formation. It has been suggested to have peptidyltransferase activity; this is somewhat controversial. Makes several contacts with the 16S rRNA in the 70S ribosome.</text>
</comment>
<comment type="subunit">
    <text evidence="1">Part of the 50S ribosomal subunit. Forms a bridge to the 30S subunit in the 70S ribosome.</text>
</comment>
<comment type="similarity">
    <text evidence="1">Belongs to the universal ribosomal protein uL2 family.</text>
</comment>
<sequence length="277" mass="30091">MAVKGFKPTTPSRRHMTVNTFEEITTDIPEKSLLVALKRSGGRNAHGKITVRHIGGGAKRKYRIIDFKRNKDGIPAKVSTIEYDPNRSAFIALVTYADGEKRYIIAPVGLKVGDVIVSGADSDIKVGNCLPIVNIPVGTTIHNIELQAGKGAQLVRSAGTSAQLMAKEGKYATLRLPSGEVRYVRIECRATIGTVSNLTHEIINIGKAGRKRHMGIRPTVRGSVMNPNDHPHGGGEGKSPVGHPGPLTPWGKPALGLKTRKNKKYSDKFIIKRKNKK</sequence>
<keyword id="KW-0687">Ribonucleoprotein</keyword>
<keyword id="KW-0689">Ribosomal protein</keyword>
<keyword id="KW-0694">RNA-binding</keyword>
<keyword id="KW-0699">rRNA-binding</keyword>
<evidence type="ECO:0000255" key="1">
    <source>
        <dbReference type="HAMAP-Rule" id="MF_01320"/>
    </source>
</evidence>
<evidence type="ECO:0000256" key="2">
    <source>
        <dbReference type="SAM" id="MobiDB-lite"/>
    </source>
</evidence>
<evidence type="ECO:0000305" key="3"/>
<protein>
    <recommendedName>
        <fullName evidence="1">Large ribosomal subunit protein uL2</fullName>
    </recommendedName>
    <alternativeName>
        <fullName evidence="3">50S ribosomal protein L2</fullName>
    </alternativeName>
</protein>
<proteinExistence type="inferred from homology"/>
<dbReference type="EMBL" id="AP009049">
    <property type="protein sequence ID" value="BAH05237.1"/>
    <property type="molecule type" value="Genomic_DNA"/>
</dbReference>
<dbReference type="RefSeq" id="WP_011988806.1">
    <property type="nucleotide sequence ID" value="NC_011837.1"/>
</dbReference>
<dbReference type="SMR" id="B9DYB2"/>
<dbReference type="KEGG" id="ckr:CKR_0186"/>
<dbReference type="HOGENOM" id="CLU_036235_2_1_9"/>
<dbReference type="Proteomes" id="UP000007969">
    <property type="component" value="Chromosome"/>
</dbReference>
<dbReference type="GO" id="GO:0015934">
    <property type="term" value="C:large ribosomal subunit"/>
    <property type="evidence" value="ECO:0007669"/>
    <property type="project" value="InterPro"/>
</dbReference>
<dbReference type="GO" id="GO:0019843">
    <property type="term" value="F:rRNA binding"/>
    <property type="evidence" value="ECO:0007669"/>
    <property type="project" value="UniProtKB-UniRule"/>
</dbReference>
<dbReference type="GO" id="GO:0003735">
    <property type="term" value="F:structural constituent of ribosome"/>
    <property type="evidence" value="ECO:0007669"/>
    <property type="project" value="InterPro"/>
</dbReference>
<dbReference type="GO" id="GO:0016740">
    <property type="term" value="F:transferase activity"/>
    <property type="evidence" value="ECO:0007669"/>
    <property type="project" value="InterPro"/>
</dbReference>
<dbReference type="GO" id="GO:0002181">
    <property type="term" value="P:cytoplasmic translation"/>
    <property type="evidence" value="ECO:0007669"/>
    <property type="project" value="TreeGrafter"/>
</dbReference>
<dbReference type="FunFam" id="2.30.30.30:FF:000001">
    <property type="entry name" value="50S ribosomal protein L2"/>
    <property type="match status" value="1"/>
</dbReference>
<dbReference type="FunFam" id="2.40.50.140:FF:000003">
    <property type="entry name" value="50S ribosomal protein L2"/>
    <property type="match status" value="1"/>
</dbReference>
<dbReference type="FunFam" id="4.10.950.10:FF:000001">
    <property type="entry name" value="50S ribosomal protein L2"/>
    <property type="match status" value="1"/>
</dbReference>
<dbReference type="Gene3D" id="2.30.30.30">
    <property type="match status" value="1"/>
</dbReference>
<dbReference type="Gene3D" id="2.40.50.140">
    <property type="entry name" value="Nucleic acid-binding proteins"/>
    <property type="match status" value="1"/>
</dbReference>
<dbReference type="Gene3D" id="4.10.950.10">
    <property type="entry name" value="Ribosomal protein L2, domain 3"/>
    <property type="match status" value="1"/>
</dbReference>
<dbReference type="HAMAP" id="MF_01320_B">
    <property type="entry name" value="Ribosomal_uL2_B"/>
    <property type="match status" value="1"/>
</dbReference>
<dbReference type="InterPro" id="IPR012340">
    <property type="entry name" value="NA-bd_OB-fold"/>
</dbReference>
<dbReference type="InterPro" id="IPR014722">
    <property type="entry name" value="Rib_uL2_dom2"/>
</dbReference>
<dbReference type="InterPro" id="IPR002171">
    <property type="entry name" value="Ribosomal_uL2"/>
</dbReference>
<dbReference type="InterPro" id="IPR005880">
    <property type="entry name" value="Ribosomal_uL2_bac/org-type"/>
</dbReference>
<dbReference type="InterPro" id="IPR022669">
    <property type="entry name" value="Ribosomal_uL2_C"/>
</dbReference>
<dbReference type="InterPro" id="IPR022671">
    <property type="entry name" value="Ribosomal_uL2_CS"/>
</dbReference>
<dbReference type="InterPro" id="IPR014726">
    <property type="entry name" value="Ribosomal_uL2_dom3"/>
</dbReference>
<dbReference type="InterPro" id="IPR022666">
    <property type="entry name" value="Ribosomal_uL2_RNA-bd_dom"/>
</dbReference>
<dbReference type="InterPro" id="IPR008991">
    <property type="entry name" value="Translation_prot_SH3-like_sf"/>
</dbReference>
<dbReference type="NCBIfam" id="TIGR01171">
    <property type="entry name" value="rplB_bact"/>
    <property type="match status" value="1"/>
</dbReference>
<dbReference type="PANTHER" id="PTHR13691:SF5">
    <property type="entry name" value="LARGE RIBOSOMAL SUBUNIT PROTEIN UL2M"/>
    <property type="match status" value="1"/>
</dbReference>
<dbReference type="PANTHER" id="PTHR13691">
    <property type="entry name" value="RIBOSOMAL PROTEIN L2"/>
    <property type="match status" value="1"/>
</dbReference>
<dbReference type="Pfam" id="PF00181">
    <property type="entry name" value="Ribosomal_L2"/>
    <property type="match status" value="1"/>
</dbReference>
<dbReference type="Pfam" id="PF03947">
    <property type="entry name" value="Ribosomal_L2_C"/>
    <property type="match status" value="1"/>
</dbReference>
<dbReference type="PIRSF" id="PIRSF002158">
    <property type="entry name" value="Ribosomal_L2"/>
    <property type="match status" value="1"/>
</dbReference>
<dbReference type="SMART" id="SM01383">
    <property type="entry name" value="Ribosomal_L2"/>
    <property type="match status" value="1"/>
</dbReference>
<dbReference type="SMART" id="SM01382">
    <property type="entry name" value="Ribosomal_L2_C"/>
    <property type="match status" value="1"/>
</dbReference>
<dbReference type="SUPFAM" id="SSF50249">
    <property type="entry name" value="Nucleic acid-binding proteins"/>
    <property type="match status" value="1"/>
</dbReference>
<dbReference type="SUPFAM" id="SSF50104">
    <property type="entry name" value="Translation proteins SH3-like domain"/>
    <property type="match status" value="1"/>
</dbReference>
<dbReference type="PROSITE" id="PS00467">
    <property type="entry name" value="RIBOSOMAL_L2"/>
    <property type="match status" value="1"/>
</dbReference>
<accession>B9DYB2</accession>